<gene>
    <name evidence="1" type="primary">rpsR</name>
    <name type="ordered locus">SAB0318</name>
</gene>
<keyword id="KW-0687">Ribonucleoprotein</keyword>
<keyword id="KW-0689">Ribosomal protein</keyword>
<keyword id="KW-0694">RNA-binding</keyword>
<keyword id="KW-0699">rRNA-binding</keyword>
<dbReference type="EMBL" id="AJ938182">
    <property type="protein sequence ID" value="CAI80006.1"/>
    <property type="molecule type" value="Genomic_DNA"/>
</dbReference>
<dbReference type="RefSeq" id="WP_000897044.1">
    <property type="nucleotide sequence ID" value="NC_007622.1"/>
</dbReference>
<dbReference type="SMR" id="Q2YVJ0"/>
<dbReference type="GeneID" id="98344693"/>
<dbReference type="KEGG" id="sab:SAB0318"/>
<dbReference type="HOGENOM" id="CLU_148710_2_2_9"/>
<dbReference type="GO" id="GO:0022627">
    <property type="term" value="C:cytosolic small ribosomal subunit"/>
    <property type="evidence" value="ECO:0007669"/>
    <property type="project" value="TreeGrafter"/>
</dbReference>
<dbReference type="GO" id="GO:0070181">
    <property type="term" value="F:small ribosomal subunit rRNA binding"/>
    <property type="evidence" value="ECO:0007669"/>
    <property type="project" value="TreeGrafter"/>
</dbReference>
<dbReference type="GO" id="GO:0003735">
    <property type="term" value="F:structural constituent of ribosome"/>
    <property type="evidence" value="ECO:0007669"/>
    <property type="project" value="InterPro"/>
</dbReference>
<dbReference type="GO" id="GO:0006412">
    <property type="term" value="P:translation"/>
    <property type="evidence" value="ECO:0007669"/>
    <property type="project" value="UniProtKB-UniRule"/>
</dbReference>
<dbReference type="FunFam" id="4.10.640.10:FF:000003">
    <property type="entry name" value="30S ribosomal protein S18"/>
    <property type="match status" value="1"/>
</dbReference>
<dbReference type="Gene3D" id="4.10.640.10">
    <property type="entry name" value="Ribosomal protein S18"/>
    <property type="match status" value="1"/>
</dbReference>
<dbReference type="HAMAP" id="MF_00270">
    <property type="entry name" value="Ribosomal_bS18"/>
    <property type="match status" value="1"/>
</dbReference>
<dbReference type="InterPro" id="IPR001648">
    <property type="entry name" value="Ribosomal_bS18"/>
</dbReference>
<dbReference type="InterPro" id="IPR018275">
    <property type="entry name" value="Ribosomal_bS18_CS"/>
</dbReference>
<dbReference type="InterPro" id="IPR036870">
    <property type="entry name" value="Ribosomal_bS18_sf"/>
</dbReference>
<dbReference type="NCBIfam" id="TIGR00165">
    <property type="entry name" value="S18"/>
    <property type="match status" value="1"/>
</dbReference>
<dbReference type="PANTHER" id="PTHR13479">
    <property type="entry name" value="30S RIBOSOMAL PROTEIN S18"/>
    <property type="match status" value="1"/>
</dbReference>
<dbReference type="PANTHER" id="PTHR13479:SF40">
    <property type="entry name" value="SMALL RIBOSOMAL SUBUNIT PROTEIN BS18M"/>
    <property type="match status" value="1"/>
</dbReference>
<dbReference type="Pfam" id="PF01084">
    <property type="entry name" value="Ribosomal_S18"/>
    <property type="match status" value="1"/>
</dbReference>
<dbReference type="PRINTS" id="PR00974">
    <property type="entry name" value="RIBOSOMALS18"/>
</dbReference>
<dbReference type="SUPFAM" id="SSF46911">
    <property type="entry name" value="Ribosomal protein S18"/>
    <property type="match status" value="1"/>
</dbReference>
<dbReference type="PROSITE" id="PS00057">
    <property type="entry name" value="RIBOSOMAL_S18"/>
    <property type="match status" value="1"/>
</dbReference>
<protein>
    <recommendedName>
        <fullName evidence="1">Small ribosomal subunit protein bS18</fullName>
    </recommendedName>
    <alternativeName>
        <fullName evidence="2">30S ribosomal protein S18</fullName>
    </alternativeName>
</protein>
<name>RS18_STAAB</name>
<feature type="chain" id="PRO_1000003621" description="Small ribosomal subunit protein bS18">
    <location>
        <begin position="1"/>
        <end position="80"/>
    </location>
</feature>
<reference key="1">
    <citation type="journal article" date="2007" name="PLoS ONE">
        <title>Molecular correlates of host specialization in Staphylococcus aureus.</title>
        <authorList>
            <person name="Herron-Olson L."/>
            <person name="Fitzgerald J.R."/>
            <person name="Musser J.M."/>
            <person name="Kapur V."/>
        </authorList>
    </citation>
    <scope>NUCLEOTIDE SEQUENCE [LARGE SCALE GENOMIC DNA]</scope>
    <source>
        <strain>bovine RF122 / ET3-1</strain>
    </source>
</reference>
<accession>Q2YVJ0</accession>
<proteinExistence type="inferred from homology"/>
<comment type="function">
    <text evidence="1">Binds as a heterodimer with protein bS6 to the central domain of the 16S rRNA, where it helps stabilize the platform of the 30S subunit.</text>
</comment>
<comment type="subunit">
    <text evidence="1">Part of the 30S ribosomal subunit. Forms a tight heterodimer with protein bS6.</text>
</comment>
<comment type="similarity">
    <text evidence="1">Belongs to the bacterial ribosomal protein bS18 family.</text>
</comment>
<organism>
    <name type="scientific">Staphylococcus aureus (strain bovine RF122 / ET3-1)</name>
    <dbReference type="NCBI Taxonomy" id="273036"/>
    <lineage>
        <taxon>Bacteria</taxon>
        <taxon>Bacillati</taxon>
        <taxon>Bacillota</taxon>
        <taxon>Bacilli</taxon>
        <taxon>Bacillales</taxon>
        <taxon>Staphylococcaceae</taxon>
        <taxon>Staphylococcus</taxon>
    </lineage>
</organism>
<evidence type="ECO:0000255" key="1">
    <source>
        <dbReference type="HAMAP-Rule" id="MF_00270"/>
    </source>
</evidence>
<evidence type="ECO:0000305" key="2"/>
<sequence length="80" mass="9310">MAGGPRRGGRRRKKVCYFTANGITHIDYKDTELLKRFISERGKILPRRVTGTSAKYQRMLTTAIKRSRHMALLPYVKEEQ</sequence>